<proteinExistence type="inferred from homology"/>
<sequence length="239" mass="26019">MQERKRVLVKFSGEALAGENGFGIENSILKFIASEIKELIKNQIEVGIVIGGGNIIRGVSAAKGGLIKRTSGDHMGMLATVINAIAIQEALESSGLEVRVQSAIQMEAFCETYIMRRAQRHLEKGRVVVFAAGTGNPYFTTDTTAILRAVEIDADMVIKATKVNGVYDKDPKQFDDAVFLNTLSYDEAMQDNIKVMDDTAIALAKDNKLPIVVCNMFEEGNLLKIIQGDTSLCSTVKNN</sequence>
<protein>
    <recommendedName>
        <fullName evidence="1">Uridylate kinase</fullName>
        <shortName evidence="1">UK</shortName>
        <ecNumber evidence="1">2.7.4.22</ecNumber>
    </recommendedName>
    <alternativeName>
        <fullName evidence="1">Uridine monophosphate kinase</fullName>
        <shortName evidence="1">UMP kinase</shortName>
        <shortName evidence="1">UMPK</shortName>
    </alternativeName>
</protein>
<accession>Q9PN24</accession>
<accession>Q0P8Y2</accession>
<keyword id="KW-0021">Allosteric enzyme</keyword>
<keyword id="KW-0067">ATP-binding</keyword>
<keyword id="KW-0963">Cytoplasm</keyword>
<keyword id="KW-0418">Kinase</keyword>
<keyword id="KW-0547">Nucleotide-binding</keyword>
<keyword id="KW-0665">Pyrimidine biosynthesis</keyword>
<keyword id="KW-1185">Reference proteome</keyword>
<keyword id="KW-0808">Transferase</keyword>
<feature type="chain" id="PRO_0000143832" description="Uridylate kinase">
    <location>
        <begin position="1"/>
        <end position="239"/>
    </location>
</feature>
<feature type="region of interest" description="Involved in allosteric activation by GTP" evidence="1">
    <location>
        <begin position="18"/>
        <end position="23"/>
    </location>
</feature>
<feature type="binding site" evidence="1">
    <location>
        <begin position="10"/>
        <end position="13"/>
    </location>
    <ligand>
        <name>ATP</name>
        <dbReference type="ChEBI" id="CHEBI:30616"/>
    </ligand>
</feature>
<feature type="binding site" evidence="1">
    <location>
        <position position="52"/>
    </location>
    <ligand>
        <name>UMP</name>
        <dbReference type="ChEBI" id="CHEBI:57865"/>
    </ligand>
</feature>
<feature type="binding site" evidence="1">
    <location>
        <position position="53"/>
    </location>
    <ligand>
        <name>ATP</name>
        <dbReference type="ChEBI" id="CHEBI:30616"/>
    </ligand>
</feature>
<feature type="binding site" evidence="1">
    <location>
        <position position="57"/>
    </location>
    <ligand>
        <name>ATP</name>
        <dbReference type="ChEBI" id="CHEBI:30616"/>
    </ligand>
</feature>
<feature type="binding site" evidence="1">
    <location>
        <position position="73"/>
    </location>
    <ligand>
        <name>UMP</name>
        <dbReference type="ChEBI" id="CHEBI:57865"/>
    </ligand>
</feature>
<feature type="binding site" evidence="1">
    <location>
        <begin position="134"/>
        <end position="141"/>
    </location>
    <ligand>
        <name>UMP</name>
        <dbReference type="ChEBI" id="CHEBI:57865"/>
    </ligand>
</feature>
<feature type="binding site" evidence="1">
    <location>
        <position position="161"/>
    </location>
    <ligand>
        <name>ATP</name>
        <dbReference type="ChEBI" id="CHEBI:30616"/>
    </ligand>
</feature>
<feature type="binding site" evidence="1">
    <location>
        <position position="167"/>
    </location>
    <ligand>
        <name>ATP</name>
        <dbReference type="ChEBI" id="CHEBI:30616"/>
    </ligand>
</feature>
<feature type="binding site" evidence="1">
    <location>
        <position position="170"/>
    </location>
    <ligand>
        <name>ATP</name>
        <dbReference type="ChEBI" id="CHEBI:30616"/>
    </ligand>
</feature>
<dbReference type="EC" id="2.7.4.22" evidence="1"/>
<dbReference type="EMBL" id="AL111168">
    <property type="protein sequence ID" value="CAL35389.1"/>
    <property type="molecule type" value="Genomic_DNA"/>
</dbReference>
<dbReference type="PIR" id="D81335">
    <property type="entry name" value="D81335"/>
</dbReference>
<dbReference type="RefSeq" id="WP_002858454.1">
    <property type="nucleotide sequence ID" value="NZ_SZUC01000001.1"/>
</dbReference>
<dbReference type="RefSeq" id="YP_002344665.1">
    <property type="nucleotide sequence ID" value="NC_002163.1"/>
</dbReference>
<dbReference type="SMR" id="Q9PN24"/>
<dbReference type="IntAct" id="Q9PN24">
    <property type="interactions" value="34"/>
</dbReference>
<dbReference type="STRING" id="192222.Cj1274c"/>
<dbReference type="PaxDb" id="192222-Cj1274c"/>
<dbReference type="EnsemblBacteria" id="CAL35389">
    <property type="protein sequence ID" value="CAL35389"/>
    <property type="gene ID" value="Cj1274c"/>
</dbReference>
<dbReference type="GeneID" id="905565"/>
<dbReference type="KEGG" id="cje:Cj1274c"/>
<dbReference type="PATRIC" id="fig|192222.6.peg.1257"/>
<dbReference type="eggNOG" id="COG0528">
    <property type="taxonomic scope" value="Bacteria"/>
</dbReference>
<dbReference type="HOGENOM" id="CLU_033861_0_0_7"/>
<dbReference type="OrthoDB" id="9807458at2"/>
<dbReference type="UniPathway" id="UPA00159">
    <property type="reaction ID" value="UER00275"/>
</dbReference>
<dbReference type="Proteomes" id="UP000000799">
    <property type="component" value="Chromosome"/>
</dbReference>
<dbReference type="GO" id="GO:0005829">
    <property type="term" value="C:cytosol"/>
    <property type="evidence" value="ECO:0007669"/>
    <property type="project" value="TreeGrafter"/>
</dbReference>
<dbReference type="GO" id="GO:0005524">
    <property type="term" value="F:ATP binding"/>
    <property type="evidence" value="ECO:0007669"/>
    <property type="project" value="UniProtKB-KW"/>
</dbReference>
<dbReference type="GO" id="GO:0033862">
    <property type="term" value="F:UMP kinase activity"/>
    <property type="evidence" value="ECO:0007669"/>
    <property type="project" value="UniProtKB-EC"/>
</dbReference>
<dbReference type="GO" id="GO:0044210">
    <property type="term" value="P:'de novo' CTP biosynthetic process"/>
    <property type="evidence" value="ECO:0007669"/>
    <property type="project" value="UniProtKB-UniRule"/>
</dbReference>
<dbReference type="GO" id="GO:0006225">
    <property type="term" value="P:UDP biosynthetic process"/>
    <property type="evidence" value="ECO:0007669"/>
    <property type="project" value="TreeGrafter"/>
</dbReference>
<dbReference type="CDD" id="cd04254">
    <property type="entry name" value="AAK_UMPK-PyrH-Ec"/>
    <property type="match status" value="1"/>
</dbReference>
<dbReference type="FunFam" id="3.40.1160.10:FF:000001">
    <property type="entry name" value="Uridylate kinase"/>
    <property type="match status" value="1"/>
</dbReference>
<dbReference type="Gene3D" id="3.40.1160.10">
    <property type="entry name" value="Acetylglutamate kinase-like"/>
    <property type="match status" value="1"/>
</dbReference>
<dbReference type="HAMAP" id="MF_01220_B">
    <property type="entry name" value="PyrH_B"/>
    <property type="match status" value="1"/>
</dbReference>
<dbReference type="InterPro" id="IPR036393">
    <property type="entry name" value="AceGlu_kinase-like_sf"/>
</dbReference>
<dbReference type="InterPro" id="IPR001048">
    <property type="entry name" value="Asp/Glu/Uridylate_kinase"/>
</dbReference>
<dbReference type="InterPro" id="IPR011817">
    <property type="entry name" value="Uridylate_kinase"/>
</dbReference>
<dbReference type="InterPro" id="IPR015963">
    <property type="entry name" value="Uridylate_kinase_bac"/>
</dbReference>
<dbReference type="NCBIfam" id="TIGR02075">
    <property type="entry name" value="pyrH_bact"/>
    <property type="match status" value="1"/>
</dbReference>
<dbReference type="PANTHER" id="PTHR42833">
    <property type="entry name" value="URIDYLATE KINASE"/>
    <property type="match status" value="1"/>
</dbReference>
<dbReference type="PANTHER" id="PTHR42833:SF4">
    <property type="entry name" value="URIDYLATE KINASE PUMPKIN, CHLOROPLASTIC"/>
    <property type="match status" value="1"/>
</dbReference>
<dbReference type="Pfam" id="PF00696">
    <property type="entry name" value="AA_kinase"/>
    <property type="match status" value="1"/>
</dbReference>
<dbReference type="PIRSF" id="PIRSF005650">
    <property type="entry name" value="Uridylate_kin"/>
    <property type="match status" value="1"/>
</dbReference>
<dbReference type="SUPFAM" id="SSF53633">
    <property type="entry name" value="Carbamate kinase-like"/>
    <property type="match status" value="1"/>
</dbReference>
<gene>
    <name evidence="1" type="primary">pyrH</name>
    <name type="ordered locus">Cj1274c</name>
</gene>
<organism>
    <name type="scientific">Campylobacter jejuni subsp. jejuni serotype O:2 (strain ATCC 700819 / NCTC 11168)</name>
    <dbReference type="NCBI Taxonomy" id="192222"/>
    <lineage>
        <taxon>Bacteria</taxon>
        <taxon>Pseudomonadati</taxon>
        <taxon>Campylobacterota</taxon>
        <taxon>Epsilonproteobacteria</taxon>
        <taxon>Campylobacterales</taxon>
        <taxon>Campylobacteraceae</taxon>
        <taxon>Campylobacter</taxon>
    </lineage>
</organism>
<name>PYRH_CAMJE</name>
<reference key="1">
    <citation type="journal article" date="2000" name="Nature">
        <title>The genome sequence of the food-borne pathogen Campylobacter jejuni reveals hypervariable sequences.</title>
        <authorList>
            <person name="Parkhill J."/>
            <person name="Wren B.W."/>
            <person name="Mungall K.L."/>
            <person name="Ketley J.M."/>
            <person name="Churcher C.M."/>
            <person name="Basham D."/>
            <person name="Chillingworth T."/>
            <person name="Davies R.M."/>
            <person name="Feltwell T."/>
            <person name="Holroyd S."/>
            <person name="Jagels K."/>
            <person name="Karlyshev A.V."/>
            <person name="Moule S."/>
            <person name="Pallen M.J."/>
            <person name="Penn C.W."/>
            <person name="Quail M.A."/>
            <person name="Rajandream M.A."/>
            <person name="Rutherford K.M."/>
            <person name="van Vliet A.H.M."/>
            <person name="Whitehead S."/>
            <person name="Barrell B.G."/>
        </authorList>
    </citation>
    <scope>NUCLEOTIDE SEQUENCE [LARGE SCALE GENOMIC DNA]</scope>
    <source>
        <strain>ATCC 700819 / NCTC 11168</strain>
    </source>
</reference>
<evidence type="ECO:0000255" key="1">
    <source>
        <dbReference type="HAMAP-Rule" id="MF_01220"/>
    </source>
</evidence>
<comment type="function">
    <text evidence="1">Catalyzes the reversible phosphorylation of UMP to UDP.</text>
</comment>
<comment type="catalytic activity">
    <reaction evidence="1">
        <text>UMP + ATP = UDP + ADP</text>
        <dbReference type="Rhea" id="RHEA:24400"/>
        <dbReference type="ChEBI" id="CHEBI:30616"/>
        <dbReference type="ChEBI" id="CHEBI:57865"/>
        <dbReference type="ChEBI" id="CHEBI:58223"/>
        <dbReference type="ChEBI" id="CHEBI:456216"/>
        <dbReference type="EC" id="2.7.4.22"/>
    </reaction>
</comment>
<comment type="activity regulation">
    <text evidence="1">Allosterically activated by GTP. Inhibited by UTP.</text>
</comment>
<comment type="pathway">
    <text evidence="1">Pyrimidine metabolism; CTP biosynthesis via de novo pathway; UDP from UMP (UMPK route): step 1/1.</text>
</comment>
<comment type="subunit">
    <text evidence="1">Homohexamer.</text>
</comment>
<comment type="subcellular location">
    <subcellularLocation>
        <location evidence="1">Cytoplasm</location>
    </subcellularLocation>
</comment>
<comment type="similarity">
    <text evidence="1">Belongs to the UMP kinase family.</text>
</comment>